<protein>
    <recommendedName>
        <fullName evidence="1">4-hydroxybenzoate octaprenyltransferase</fullName>
        <ecNumber evidence="1">2.5.1.39</ecNumber>
    </recommendedName>
    <alternativeName>
        <fullName evidence="1">4-HB polyprenyltransferase</fullName>
    </alternativeName>
</protein>
<dbReference type="EC" id="2.5.1.39" evidence="1"/>
<dbReference type="EMBL" id="CP000789">
    <property type="protein sequence ID" value="ABU69300.1"/>
    <property type="molecule type" value="Genomic_DNA"/>
</dbReference>
<dbReference type="RefSeq" id="WP_012126569.1">
    <property type="nucleotide sequence ID" value="NC_009783.1"/>
</dbReference>
<dbReference type="SMR" id="A7N0X0"/>
<dbReference type="KEGG" id="vha:VIBHAR_00272"/>
<dbReference type="PATRIC" id="fig|338187.25.peg.2297"/>
<dbReference type="UniPathway" id="UPA00232"/>
<dbReference type="Proteomes" id="UP000008152">
    <property type="component" value="Chromosome I"/>
</dbReference>
<dbReference type="GO" id="GO:0005886">
    <property type="term" value="C:plasma membrane"/>
    <property type="evidence" value="ECO:0007669"/>
    <property type="project" value="UniProtKB-SubCell"/>
</dbReference>
<dbReference type="GO" id="GO:0008412">
    <property type="term" value="F:4-hydroxybenzoate polyprenyltransferase activity"/>
    <property type="evidence" value="ECO:0007669"/>
    <property type="project" value="UniProtKB-UniRule"/>
</dbReference>
<dbReference type="GO" id="GO:0006744">
    <property type="term" value="P:ubiquinone biosynthetic process"/>
    <property type="evidence" value="ECO:0007669"/>
    <property type="project" value="UniProtKB-UniRule"/>
</dbReference>
<dbReference type="CDD" id="cd13959">
    <property type="entry name" value="PT_UbiA_COQ2"/>
    <property type="match status" value="1"/>
</dbReference>
<dbReference type="FunFam" id="1.10.357.140:FF:000002">
    <property type="entry name" value="4-hydroxybenzoate octaprenyltransferase"/>
    <property type="match status" value="1"/>
</dbReference>
<dbReference type="FunFam" id="1.20.120.1780:FF:000001">
    <property type="entry name" value="4-hydroxybenzoate octaprenyltransferase"/>
    <property type="match status" value="1"/>
</dbReference>
<dbReference type="Gene3D" id="1.10.357.140">
    <property type="entry name" value="UbiA prenyltransferase"/>
    <property type="match status" value="1"/>
</dbReference>
<dbReference type="Gene3D" id="1.20.120.1780">
    <property type="entry name" value="UbiA prenyltransferase"/>
    <property type="match status" value="1"/>
</dbReference>
<dbReference type="HAMAP" id="MF_01635">
    <property type="entry name" value="UbiA"/>
    <property type="match status" value="1"/>
</dbReference>
<dbReference type="InterPro" id="IPR006370">
    <property type="entry name" value="HB_polyprenyltransferase-like"/>
</dbReference>
<dbReference type="InterPro" id="IPR039653">
    <property type="entry name" value="Prenyltransferase"/>
</dbReference>
<dbReference type="InterPro" id="IPR000537">
    <property type="entry name" value="UbiA_prenyltransferase"/>
</dbReference>
<dbReference type="InterPro" id="IPR044878">
    <property type="entry name" value="UbiA_sf"/>
</dbReference>
<dbReference type="NCBIfam" id="TIGR01474">
    <property type="entry name" value="ubiA_proteo"/>
    <property type="match status" value="1"/>
</dbReference>
<dbReference type="PANTHER" id="PTHR11048:SF28">
    <property type="entry name" value="4-HYDROXYBENZOATE POLYPRENYLTRANSFERASE, MITOCHONDRIAL"/>
    <property type="match status" value="1"/>
</dbReference>
<dbReference type="PANTHER" id="PTHR11048">
    <property type="entry name" value="PRENYLTRANSFERASES"/>
    <property type="match status" value="1"/>
</dbReference>
<dbReference type="Pfam" id="PF01040">
    <property type="entry name" value="UbiA"/>
    <property type="match status" value="1"/>
</dbReference>
<feature type="chain" id="PRO_1000069836" description="4-hydroxybenzoate octaprenyltransferase">
    <location>
        <begin position="1"/>
        <end position="284"/>
    </location>
</feature>
<feature type="transmembrane region" description="Helical" evidence="1">
    <location>
        <begin position="33"/>
        <end position="53"/>
    </location>
</feature>
<feature type="transmembrane region" description="Helical" evidence="1">
    <location>
        <begin position="93"/>
        <end position="113"/>
    </location>
</feature>
<feature type="transmembrane region" description="Helical" evidence="1">
    <location>
        <begin position="136"/>
        <end position="156"/>
    </location>
</feature>
<feature type="transmembrane region" description="Helical" evidence="1">
    <location>
        <begin position="159"/>
        <end position="179"/>
    </location>
</feature>
<feature type="transmembrane region" description="Helical" evidence="1">
    <location>
        <begin position="209"/>
        <end position="229"/>
    </location>
</feature>
<feature type="transmembrane region" description="Helical" evidence="1">
    <location>
        <begin position="231"/>
        <end position="248"/>
    </location>
</feature>
<feature type="transmembrane region" description="Helical" evidence="1">
    <location>
        <begin position="264"/>
        <end position="284"/>
    </location>
</feature>
<reference key="1">
    <citation type="submission" date="2007-08" db="EMBL/GenBank/DDBJ databases">
        <authorList>
            <consortium name="The Vibrio harveyi Genome Sequencing Project"/>
            <person name="Bassler B."/>
            <person name="Clifton S.W."/>
            <person name="Fulton L."/>
            <person name="Delehaunty K."/>
            <person name="Fronick C."/>
            <person name="Harrison M."/>
            <person name="Markivic C."/>
            <person name="Fulton R."/>
            <person name="Tin-Wollam A.-M."/>
            <person name="Shah N."/>
            <person name="Pepin K."/>
            <person name="Nash W."/>
            <person name="Thiruvilangam P."/>
            <person name="Bhonagiri V."/>
            <person name="Waters C."/>
            <person name="Tu K.C."/>
            <person name="Irgon J."/>
            <person name="Wilson R.K."/>
        </authorList>
    </citation>
    <scope>NUCLEOTIDE SEQUENCE [LARGE SCALE GENOMIC DNA]</scope>
    <source>
        <strain>ATCC BAA-1116 / BB120</strain>
    </source>
</reference>
<name>UBIA_VIBC1</name>
<gene>
    <name evidence="1" type="primary">ubiA</name>
    <name type="ordered locus">VIBHAR_00272</name>
</gene>
<keyword id="KW-0997">Cell inner membrane</keyword>
<keyword id="KW-1003">Cell membrane</keyword>
<keyword id="KW-0460">Magnesium</keyword>
<keyword id="KW-0472">Membrane</keyword>
<keyword id="KW-0808">Transferase</keyword>
<keyword id="KW-0812">Transmembrane</keyword>
<keyword id="KW-1133">Transmembrane helix</keyword>
<keyword id="KW-0831">Ubiquinone biosynthesis</keyword>
<accession>A7N0X0</accession>
<sequence>MSAEKAKAYWQLMRMDRPIGSLLLLWPTVWALVIAAQGMPSWNVLIVFVLGVFLMRSAGCVINDFADRKVDGHVKRTKQRPLPSGKVTSKEAIGLFLVLGISSFLLVLTMNPLTIKLSFAGIFLAFIYPFMKRYTYLPQLFLGLAFSWAIPMAWAAQTGELPWIVWFVFVINALWTIAYDTQYAMVDRDDDLKIGIKSTAILFGRHDKLVIGVLQLVTLAMLVLLGQHYELGQSYYWTILVAASLFVYQQHLIRHRERDLCFKAFLNNNYVGIVIVIGLLIAFW</sequence>
<proteinExistence type="inferred from homology"/>
<comment type="function">
    <text evidence="1">Catalyzes the prenylation of para-hydroxybenzoate (PHB) with an all-trans polyprenyl group. Mediates the second step in the final reaction sequence of ubiquinone-8 (UQ-8) biosynthesis, which is the condensation of the polyisoprenoid side chain with PHB, generating the first membrane-bound Q intermediate 3-octaprenyl-4-hydroxybenzoate.</text>
</comment>
<comment type="catalytic activity">
    <reaction evidence="1">
        <text>all-trans-octaprenyl diphosphate + 4-hydroxybenzoate = 4-hydroxy-3-(all-trans-octaprenyl)benzoate + diphosphate</text>
        <dbReference type="Rhea" id="RHEA:27782"/>
        <dbReference type="ChEBI" id="CHEBI:1617"/>
        <dbReference type="ChEBI" id="CHEBI:17879"/>
        <dbReference type="ChEBI" id="CHEBI:33019"/>
        <dbReference type="ChEBI" id="CHEBI:57711"/>
        <dbReference type="EC" id="2.5.1.39"/>
    </reaction>
</comment>
<comment type="cofactor">
    <cofactor evidence="1">
        <name>Mg(2+)</name>
        <dbReference type="ChEBI" id="CHEBI:18420"/>
    </cofactor>
</comment>
<comment type="pathway">
    <text evidence="1">Cofactor biosynthesis; ubiquinone biosynthesis.</text>
</comment>
<comment type="subcellular location">
    <subcellularLocation>
        <location evidence="1">Cell inner membrane</location>
        <topology evidence="1">Multi-pass membrane protein</topology>
    </subcellularLocation>
</comment>
<comment type="similarity">
    <text evidence="1">Belongs to the UbiA prenyltransferase family.</text>
</comment>
<organism>
    <name type="scientific">Vibrio campbellii (strain ATCC BAA-1116)</name>
    <dbReference type="NCBI Taxonomy" id="2902295"/>
    <lineage>
        <taxon>Bacteria</taxon>
        <taxon>Pseudomonadati</taxon>
        <taxon>Pseudomonadota</taxon>
        <taxon>Gammaproteobacteria</taxon>
        <taxon>Vibrionales</taxon>
        <taxon>Vibrionaceae</taxon>
        <taxon>Vibrio</taxon>
    </lineage>
</organism>
<evidence type="ECO:0000255" key="1">
    <source>
        <dbReference type="HAMAP-Rule" id="MF_01635"/>
    </source>
</evidence>